<keyword id="KW-0963">Cytoplasm</keyword>
<keyword id="KW-0269">Exonuclease</keyword>
<keyword id="KW-0378">Hydrolase</keyword>
<keyword id="KW-0540">Nuclease</keyword>
<proteinExistence type="inferred from homology"/>
<accession>C1CKV2</accession>
<organism>
    <name type="scientific">Streptococcus pneumoniae (strain P1031)</name>
    <dbReference type="NCBI Taxonomy" id="488223"/>
    <lineage>
        <taxon>Bacteria</taxon>
        <taxon>Bacillati</taxon>
        <taxon>Bacillota</taxon>
        <taxon>Bacilli</taxon>
        <taxon>Lactobacillales</taxon>
        <taxon>Streptococcaceae</taxon>
        <taxon>Streptococcus</taxon>
    </lineage>
</organism>
<evidence type="ECO:0000255" key="1">
    <source>
        <dbReference type="HAMAP-Rule" id="MF_00337"/>
    </source>
</evidence>
<sequence length="70" mass="7850">MSKQKKFEENLAELETIVQSLENGEIALEDAITAFQKGMVLSKELQATLDKAEKTLVKVMQEDGTESDFE</sequence>
<reference key="1">
    <citation type="journal article" date="2010" name="Genome Biol.">
        <title>Structure and dynamics of the pan-genome of Streptococcus pneumoniae and closely related species.</title>
        <authorList>
            <person name="Donati C."/>
            <person name="Hiller N.L."/>
            <person name="Tettelin H."/>
            <person name="Muzzi A."/>
            <person name="Croucher N.J."/>
            <person name="Angiuoli S.V."/>
            <person name="Oggioni M."/>
            <person name="Dunning Hotopp J.C."/>
            <person name="Hu F.Z."/>
            <person name="Riley D.R."/>
            <person name="Covacci A."/>
            <person name="Mitchell T.J."/>
            <person name="Bentley S.D."/>
            <person name="Kilian M."/>
            <person name="Ehrlich G.D."/>
            <person name="Rappuoli R."/>
            <person name="Moxon E.R."/>
            <person name="Masignani V."/>
        </authorList>
    </citation>
    <scope>NUCLEOTIDE SEQUENCE [LARGE SCALE GENOMIC DNA]</scope>
    <source>
        <strain>P1031</strain>
    </source>
</reference>
<feature type="chain" id="PRO_1000200264" description="Exodeoxyribonuclease 7 small subunit">
    <location>
        <begin position="1"/>
        <end position="70"/>
    </location>
</feature>
<gene>
    <name evidence="1" type="primary">xseB</name>
    <name type="ordered locus">SPP_1247</name>
</gene>
<protein>
    <recommendedName>
        <fullName evidence="1">Exodeoxyribonuclease 7 small subunit</fullName>
        <ecNumber evidence="1">3.1.11.6</ecNumber>
    </recommendedName>
    <alternativeName>
        <fullName evidence="1">Exodeoxyribonuclease VII small subunit</fullName>
        <shortName evidence="1">Exonuclease VII small subunit</shortName>
    </alternativeName>
</protein>
<name>EX7S_STRZP</name>
<comment type="function">
    <text evidence="1">Bidirectionally degrades single-stranded DNA into large acid-insoluble oligonucleotides, which are then degraded further into small acid-soluble oligonucleotides.</text>
</comment>
<comment type="catalytic activity">
    <reaction evidence="1">
        <text>Exonucleolytic cleavage in either 5'- to 3'- or 3'- to 5'-direction to yield nucleoside 5'-phosphates.</text>
        <dbReference type="EC" id="3.1.11.6"/>
    </reaction>
</comment>
<comment type="subunit">
    <text evidence="1">Heterooligomer composed of large and small subunits.</text>
</comment>
<comment type="subcellular location">
    <subcellularLocation>
        <location evidence="1">Cytoplasm</location>
    </subcellularLocation>
</comment>
<comment type="similarity">
    <text evidence="1">Belongs to the XseB family.</text>
</comment>
<dbReference type="EC" id="3.1.11.6" evidence="1"/>
<dbReference type="EMBL" id="CP000920">
    <property type="protein sequence ID" value="ACO20992.1"/>
    <property type="molecule type" value="Genomic_DNA"/>
</dbReference>
<dbReference type="RefSeq" id="WP_000043230.1">
    <property type="nucleotide sequence ID" value="NC_012467.1"/>
</dbReference>
<dbReference type="SMR" id="C1CKV2"/>
<dbReference type="KEGG" id="spp:SPP_1247"/>
<dbReference type="HOGENOM" id="CLU_145918_3_2_9"/>
<dbReference type="GO" id="GO:0005829">
    <property type="term" value="C:cytosol"/>
    <property type="evidence" value="ECO:0007669"/>
    <property type="project" value="TreeGrafter"/>
</dbReference>
<dbReference type="GO" id="GO:0009318">
    <property type="term" value="C:exodeoxyribonuclease VII complex"/>
    <property type="evidence" value="ECO:0007669"/>
    <property type="project" value="InterPro"/>
</dbReference>
<dbReference type="GO" id="GO:0008855">
    <property type="term" value="F:exodeoxyribonuclease VII activity"/>
    <property type="evidence" value="ECO:0007669"/>
    <property type="project" value="UniProtKB-UniRule"/>
</dbReference>
<dbReference type="GO" id="GO:0006308">
    <property type="term" value="P:DNA catabolic process"/>
    <property type="evidence" value="ECO:0007669"/>
    <property type="project" value="UniProtKB-UniRule"/>
</dbReference>
<dbReference type="FunFam" id="1.10.287.1040:FF:000003">
    <property type="entry name" value="Exodeoxyribonuclease 7 small subunit"/>
    <property type="match status" value="1"/>
</dbReference>
<dbReference type="Gene3D" id="1.10.287.1040">
    <property type="entry name" value="Exonuclease VII, small subunit"/>
    <property type="match status" value="1"/>
</dbReference>
<dbReference type="HAMAP" id="MF_00337">
    <property type="entry name" value="Exonuc_7_S"/>
    <property type="match status" value="1"/>
</dbReference>
<dbReference type="InterPro" id="IPR003761">
    <property type="entry name" value="Exonuc_VII_S"/>
</dbReference>
<dbReference type="InterPro" id="IPR037004">
    <property type="entry name" value="Exonuc_VII_ssu_sf"/>
</dbReference>
<dbReference type="NCBIfam" id="NF002138">
    <property type="entry name" value="PRK00977.1-2"/>
    <property type="match status" value="1"/>
</dbReference>
<dbReference type="NCBIfam" id="TIGR01280">
    <property type="entry name" value="xseB"/>
    <property type="match status" value="1"/>
</dbReference>
<dbReference type="PANTHER" id="PTHR34137">
    <property type="entry name" value="EXODEOXYRIBONUCLEASE 7 SMALL SUBUNIT"/>
    <property type="match status" value="1"/>
</dbReference>
<dbReference type="PANTHER" id="PTHR34137:SF1">
    <property type="entry name" value="EXODEOXYRIBONUCLEASE 7 SMALL SUBUNIT"/>
    <property type="match status" value="1"/>
</dbReference>
<dbReference type="Pfam" id="PF02609">
    <property type="entry name" value="Exonuc_VII_S"/>
    <property type="match status" value="1"/>
</dbReference>
<dbReference type="PIRSF" id="PIRSF006488">
    <property type="entry name" value="Exonuc_VII_S"/>
    <property type="match status" value="1"/>
</dbReference>
<dbReference type="SUPFAM" id="SSF116842">
    <property type="entry name" value="XseB-like"/>
    <property type="match status" value="1"/>
</dbReference>